<feature type="chain" id="PRO_1000130345" description="Histidine decarboxylase">
    <location>
        <begin position="1"/>
        <end position="383"/>
    </location>
</feature>
<feature type="binding site" evidence="1">
    <location>
        <position position="120"/>
    </location>
    <ligand>
        <name>substrate</name>
    </ligand>
</feature>
<feature type="modified residue" description="N6-(pyridoxal phosphate)lysine" evidence="1">
    <location>
        <position position="233"/>
    </location>
</feature>
<keyword id="KW-0210">Decarboxylase</keyword>
<keyword id="KW-0456">Lyase</keyword>
<keyword id="KW-0663">Pyridoxal phosphate</keyword>
<accession>B7I459</accession>
<comment type="catalytic activity">
    <reaction evidence="1">
        <text>L-histidine + H(+) = histamine + CO2</text>
        <dbReference type="Rhea" id="RHEA:20840"/>
        <dbReference type="ChEBI" id="CHEBI:15378"/>
        <dbReference type="ChEBI" id="CHEBI:16526"/>
        <dbReference type="ChEBI" id="CHEBI:57595"/>
        <dbReference type="ChEBI" id="CHEBI:58432"/>
        <dbReference type="EC" id="4.1.1.22"/>
    </reaction>
</comment>
<comment type="cofactor">
    <cofactor evidence="1">
        <name>pyridoxal 5'-phosphate</name>
        <dbReference type="ChEBI" id="CHEBI:597326"/>
    </cofactor>
</comment>
<comment type="subunit">
    <text evidence="1">Homotetramer.</text>
</comment>
<comment type="similarity">
    <text evidence="1">Belongs to the group II decarboxylase family.</text>
</comment>
<organism>
    <name type="scientific">Acinetobacter baumannii (strain AB0057)</name>
    <dbReference type="NCBI Taxonomy" id="480119"/>
    <lineage>
        <taxon>Bacteria</taxon>
        <taxon>Pseudomonadati</taxon>
        <taxon>Pseudomonadota</taxon>
        <taxon>Gammaproteobacteria</taxon>
        <taxon>Moraxellales</taxon>
        <taxon>Moraxellaceae</taxon>
        <taxon>Acinetobacter</taxon>
        <taxon>Acinetobacter calcoaceticus/baumannii complex</taxon>
    </lineage>
</organism>
<dbReference type="EC" id="4.1.1.22" evidence="1"/>
<dbReference type="EMBL" id="CP001182">
    <property type="protein sequence ID" value="ACJ42158.1"/>
    <property type="molecule type" value="Genomic_DNA"/>
</dbReference>
<dbReference type="SMR" id="B7I459"/>
<dbReference type="KEGG" id="abn:AB57_2808"/>
<dbReference type="HOGENOM" id="CLU_028929_0_2_6"/>
<dbReference type="Proteomes" id="UP000007094">
    <property type="component" value="Chromosome"/>
</dbReference>
<dbReference type="GO" id="GO:0004398">
    <property type="term" value="F:histidine decarboxylase activity"/>
    <property type="evidence" value="ECO:0007669"/>
    <property type="project" value="UniProtKB-UniRule"/>
</dbReference>
<dbReference type="GO" id="GO:0030170">
    <property type="term" value="F:pyridoxal phosphate binding"/>
    <property type="evidence" value="ECO:0007669"/>
    <property type="project" value="InterPro"/>
</dbReference>
<dbReference type="GO" id="GO:0019752">
    <property type="term" value="P:carboxylic acid metabolic process"/>
    <property type="evidence" value="ECO:0007669"/>
    <property type="project" value="InterPro"/>
</dbReference>
<dbReference type="Gene3D" id="3.40.640.10">
    <property type="entry name" value="Type I PLP-dependent aspartate aminotransferase-like (Major domain)"/>
    <property type="match status" value="1"/>
</dbReference>
<dbReference type="HAMAP" id="MF_00609">
    <property type="entry name" value="Pyridoxal_decarbox"/>
    <property type="match status" value="1"/>
</dbReference>
<dbReference type="InterPro" id="IPR051151">
    <property type="entry name" value="Group_II_Decarboxylase"/>
</dbReference>
<dbReference type="InterPro" id="IPR023523">
    <property type="entry name" value="Hist_deCOase_bac"/>
</dbReference>
<dbReference type="InterPro" id="IPR002129">
    <property type="entry name" value="PyrdxlP-dep_de-COase"/>
</dbReference>
<dbReference type="InterPro" id="IPR015424">
    <property type="entry name" value="PyrdxlP-dep_Trfase"/>
</dbReference>
<dbReference type="InterPro" id="IPR015421">
    <property type="entry name" value="PyrdxlP-dep_Trfase_major"/>
</dbReference>
<dbReference type="InterPro" id="IPR021115">
    <property type="entry name" value="Pyridoxal-P_BS"/>
</dbReference>
<dbReference type="NCBIfam" id="NF002748">
    <property type="entry name" value="PRK02769.1"/>
    <property type="match status" value="1"/>
</dbReference>
<dbReference type="PANTHER" id="PTHR46101">
    <property type="match status" value="1"/>
</dbReference>
<dbReference type="PANTHER" id="PTHR46101:SF2">
    <property type="entry name" value="SERINE DECARBOXYLASE"/>
    <property type="match status" value="1"/>
</dbReference>
<dbReference type="Pfam" id="PF00282">
    <property type="entry name" value="Pyridoxal_deC"/>
    <property type="match status" value="1"/>
</dbReference>
<dbReference type="SUPFAM" id="SSF53383">
    <property type="entry name" value="PLP-dependent transferases"/>
    <property type="match status" value="1"/>
</dbReference>
<dbReference type="PROSITE" id="PS00392">
    <property type="entry name" value="DDC_GAD_HDC_YDC"/>
    <property type="match status" value="1"/>
</dbReference>
<gene>
    <name evidence="1" type="primary">hdc</name>
    <name type="ordered locus">AB57_2808</name>
</gene>
<protein>
    <recommendedName>
        <fullName evidence="1">Histidine decarboxylase</fullName>
        <shortName evidence="1">HDC</shortName>
        <ecNumber evidence="1">4.1.1.22</ecNumber>
    </recommendedName>
</protein>
<reference key="1">
    <citation type="journal article" date="2008" name="J. Bacteriol.">
        <title>Comparative genome sequence analysis of multidrug-resistant Acinetobacter baumannii.</title>
        <authorList>
            <person name="Adams M.D."/>
            <person name="Goglin K."/>
            <person name="Molyneaux N."/>
            <person name="Hujer K.M."/>
            <person name="Lavender H."/>
            <person name="Jamison J.J."/>
            <person name="MacDonald I.J."/>
            <person name="Martin K.M."/>
            <person name="Russo T."/>
            <person name="Campagnari A.A."/>
            <person name="Hujer A.M."/>
            <person name="Bonomo R.A."/>
            <person name="Gill S.R."/>
        </authorList>
    </citation>
    <scope>NUCLEOTIDE SEQUENCE [LARGE SCALE GENOMIC DNA]</scope>
    <source>
        <strain>AB0057</strain>
    </source>
</reference>
<sequence length="383" mass="43737">MILSPADQERIETFWNYCLKHQYFNIGYPESADFDYSALFRFFKFSINNCGDWKDYSNYALNSFDFEKDVMAYFAEIFQIPFEESWGYVTNGGTEGNMFGCYLARELFSDSTLYYSKDTHYSVGKIAKLLQMKSCVIESLDNGEIDYDDLIHKIKTNKESHPIIFANIGTTMTGAIDDIEMIQERLAQIGIMRRDYYIHADAALSGMILPFVDHPQAFSFAHGIDSICVSGHKMIGSPIPCGIVVAKRQNVERISVDVDYISTRDQTISGSRNGHTVLLMWAAIRSQTNLQRRQRIQHCLKMAQYAVDRFQAVGIPAWRNPNSITVVFPCPSEHIWKKHYLATSGNMAHLITTAHHRDTRQIDSLIDDVIFDLQGASKRTVGF</sequence>
<evidence type="ECO:0000255" key="1">
    <source>
        <dbReference type="HAMAP-Rule" id="MF_00609"/>
    </source>
</evidence>
<proteinExistence type="inferred from homology"/>
<name>DCHS_ACIB5</name>